<comment type="function">
    <text evidence="1">Involved in mRNA degradation. Catalyzes the phosphorolysis of single-stranded polyribonucleotides processively in the 3'- to 5'-direction.</text>
</comment>
<comment type="catalytic activity">
    <reaction evidence="1">
        <text>RNA(n+1) + phosphate = RNA(n) + a ribonucleoside 5'-diphosphate</text>
        <dbReference type="Rhea" id="RHEA:22096"/>
        <dbReference type="Rhea" id="RHEA-COMP:14527"/>
        <dbReference type="Rhea" id="RHEA-COMP:17342"/>
        <dbReference type="ChEBI" id="CHEBI:43474"/>
        <dbReference type="ChEBI" id="CHEBI:57930"/>
        <dbReference type="ChEBI" id="CHEBI:140395"/>
        <dbReference type="EC" id="2.7.7.8"/>
    </reaction>
</comment>
<comment type="cofactor">
    <cofactor evidence="1">
        <name>Mg(2+)</name>
        <dbReference type="ChEBI" id="CHEBI:18420"/>
    </cofactor>
</comment>
<comment type="subunit">
    <text evidence="1">Component of the RNA degradosome, which is a multiprotein complex involved in RNA processing and mRNA degradation.</text>
</comment>
<comment type="subcellular location">
    <subcellularLocation>
        <location evidence="1">Cytoplasm</location>
    </subcellularLocation>
</comment>
<comment type="similarity">
    <text evidence="1">Belongs to the polyribonucleotide nucleotidyltransferase family.</text>
</comment>
<dbReference type="EC" id="2.7.7.8" evidence="1"/>
<dbReference type="EMBL" id="CP000606">
    <property type="protein sequence ID" value="ABO24688.1"/>
    <property type="molecule type" value="Genomic_DNA"/>
</dbReference>
<dbReference type="RefSeq" id="WP_011866619.1">
    <property type="nucleotide sequence ID" value="NC_009092.1"/>
</dbReference>
<dbReference type="SMR" id="A3QGU0"/>
<dbReference type="STRING" id="323850.Shew_2822"/>
<dbReference type="KEGG" id="slo:Shew_2822"/>
<dbReference type="eggNOG" id="COG1185">
    <property type="taxonomic scope" value="Bacteria"/>
</dbReference>
<dbReference type="HOGENOM" id="CLU_004217_2_2_6"/>
<dbReference type="OrthoDB" id="9804305at2"/>
<dbReference type="Proteomes" id="UP000001558">
    <property type="component" value="Chromosome"/>
</dbReference>
<dbReference type="GO" id="GO:0005829">
    <property type="term" value="C:cytosol"/>
    <property type="evidence" value="ECO:0007669"/>
    <property type="project" value="TreeGrafter"/>
</dbReference>
<dbReference type="GO" id="GO:0000175">
    <property type="term" value="F:3'-5'-RNA exonuclease activity"/>
    <property type="evidence" value="ECO:0007669"/>
    <property type="project" value="TreeGrafter"/>
</dbReference>
<dbReference type="GO" id="GO:0000287">
    <property type="term" value="F:magnesium ion binding"/>
    <property type="evidence" value="ECO:0007669"/>
    <property type="project" value="UniProtKB-UniRule"/>
</dbReference>
<dbReference type="GO" id="GO:0004654">
    <property type="term" value="F:polyribonucleotide nucleotidyltransferase activity"/>
    <property type="evidence" value="ECO:0007669"/>
    <property type="project" value="UniProtKB-UniRule"/>
</dbReference>
<dbReference type="GO" id="GO:0003723">
    <property type="term" value="F:RNA binding"/>
    <property type="evidence" value="ECO:0007669"/>
    <property type="project" value="UniProtKB-UniRule"/>
</dbReference>
<dbReference type="GO" id="GO:0006402">
    <property type="term" value="P:mRNA catabolic process"/>
    <property type="evidence" value="ECO:0007669"/>
    <property type="project" value="UniProtKB-UniRule"/>
</dbReference>
<dbReference type="GO" id="GO:0006396">
    <property type="term" value="P:RNA processing"/>
    <property type="evidence" value="ECO:0007669"/>
    <property type="project" value="InterPro"/>
</dbReference>
<dbReference type="CDD" id="cd02393">
    <property type="entry name" value="KH-I_PNPase"/>
    <property type="match status" value="1"/>
</dbReference>
<dbReference type="CDD" id="cd11363">
    <property type="entry name" value="RNase_PH_PNPase_1"/>
    <property type="match status" value="1"/>
</dbReference>
<dbReference type="CDD" id="cd11364">
    <property type="entry name" value="RNase_PH_PNPase_2"/>
    <property type="match status" value="1"/>
</dbReference>
<dbReference type="CDD" id="cd04472">
    <property type="entry name" value="S1_PNPase"/>
    <property type="match status" value="1"/>
</dbReference>
<dbReference type="FunFam" id="2.40.50.140:FF:000023">
    <property type="entry name" value="Polyribonucleotide nucleotidyltransferase"/>
    <property type="match status" value="1"/>
</dbReference>
<dbReference type="FunFam" id="3.30.1370.10:FF:000001">
    <property type="entry name" value="Polyribonucleotide nucleotidyltransferase"/>
    <property type="match status" value="1"/>
</dbReference>
<dbReference type="FunFam" id="3.30.230.70:FF:000001">
    <property type="entry name" value="Polyribonucleotide nucleotidyltransferase"/>
    <property type="match status" value="1"/>
</dbReference>
<dbReference type="FunFam" id="3.30.230.70:FF:000002">
    <property type="entry name" value="Polyribonucleotide nucleotidyltransferase"/>
    <property type="match status" value="1"/>
</dbReference>
<dbReference type="Gene3D" id="3.30.230.70">
    <property type="entry name" value="GHMP Kinase, N-terminal domain"/>
    <property type="match status" value="2"/>
</dbReference>
<dbReference type="Gene3D" id="3.30.1370.10">
    <property type="entry name" value="K Homology domain, type 1"/>
    <property type="match status" value="1"/>
</dbReference>
<dbReference type="Gene3D" id="2.40.50.140">
    <property type="entry name" value="Nucleic acid-binding proteins"/>
    <property type="match status" value="1"/>
</dbReference>
<dbReference type="HAMAP" id="MF_01595">
    <property type="entry name" value="PNPase"/>
    <property type="match status" value="1"/>
</dbReference>
<dbReference type="InterPro" id="IPR001247">
    <property type="entry name" value="ExoRNase_PH_dom1"/>
</dbReference>
<dbReference type="InterPro" id="IPR015847">
    <property type="entry name" value="ExoRNase_PH_dom2"/>
</dbReference>
<dbReference type="InterPro" id="IPR036345">
    <property type="entry name" value="ExoRNase_PH_dom2_sf"/>
</dbReference>
<dbReference type="InterPro" id="IPR004087">
    <property type="entry name" value="KH_dom"/>
</dbReference>
<dbReference type="InterPro" id="IPR004088">
    <property type="entry name" value="KH_dom_type_1"/>
</dbReference>
<dbReference type="InterPro" id="IPR036612">
    <property type="entry name" value="KH_dom_type_1_sf"/>
</dbReference>
<dbReference type="InterPro" id="IPR012340">
    <property type="entry name" value="NA-bd_OB-fold"/>
</dbReference>
<dbReference type="InterPro" id="IPR012162">
    <property type="entry name" value="PNPase"/>
</dbReference>
<dbReference type="InterPro" id="IPR027408">
    <property type="entry name" value="PNPase/RNase_PH_dom_sf"/>
</dbReference>
<dbReference type="InterPro" id="IPR015848">
    <property type="entry name" value="PNPase_PH_RNA-bd_bac/org-type"/>
</dbReference>
<dbReference type="InterPro" id="IPR036456">
    <property type="entry name" value="PNPase_PH_RNA-bd_sf"/>
</dbReference>
<dbReference type="InterPro" id="IPR020568">
    <property type="entry name" value="Ribosomal_Su5_D2-typ_SF"/>
</dbReference>
<dbReference type="InterPro" id="IPR003029">
    <property type="entry name" value="S1_domain"/>
</dbReference>
<dbReference type="NCBIfam" id="TIGR03591">
    <property type="entry name" value="polynuc_phos"/>
    <property type="match status" value="1"/>
</dbReference>
<dbReference type="NCBIfam" id="NF008805">
    <property type="entry name" value="PRK11824.1"/>
    <property type="match status" value="1"/>
</dbReference>
<dbReference type="PANTHER" id="PTHR11252">
    <property type="entry name" value="POLYRIBONUCLEOTIDE NUCLEOTIDYLTRANSFERASE"/>
    <property type="match status" value="1"/>
</dbReference>
<dbReference type="PANTHER" id="PTHR11252:SF0">
    <property type="entry name" value="POLYRIBONUCLEOTIDE NUCLEOTIDYLTRANSFERASE 1, MITOCHONDRIAL"/>
    <property type="match status" value="1"/>
</dbReference>
<dbReference type="Pfam" id="PF00013">
    <property type="entry name" value="KH_1"/>
    <property type="match status" value="1"/>
</dbReference>
<dbReference type="Pfam" id="PF03726">
    <property type="entry name" value="PNPase"/>
    <property type="match status" value="1"/>
</dbReference>
<dbReference type="Pfam" id="PF01138">
    <property type="entry name" value="RNase_PH"/>
    <property type="match status" value="2"/>
</dbReference>
<dbReference type="Pfam" id="PF03725">
    <property type="entry name" value="RNase_PH_C"/>
    <property type="match status" value="2"/>
</dbReference>
<dbReference type="Pfam" id="PF00575">
    <property type="entry name" value="S1"/>
    <property type="match status" value="1"/>
</dbReference>
<dbReference type="PIRSF" id="PIRSF005499">
    <property type="entry name" value="PNPase"/>
    <property type="match status" value="1"/>
</dbReference>
<dbReference type="SMART" id="SM00322">
    <property type="entry name" value="KH"/>
    <property type="match status" value="1"/>
</dbReference>
<dbReference type="SMART" id="SM00316">
    <property type="entry name" value="S1"/>
    <property type="match status" value="1"/>
</dbReference>
<dbReference type="SUPFAM" id="SSF54791">
    <property type="entry name" value="Eukaryotic type KH-domain (KH-domain type I)"/>
    <property type="match status" value="1"/>
</dbReference>
<dbReference type="SUPFAM" id="SSF50249">
    <property type="entry name" value="Nucleic acid-binding proteins"/>
    <property type="match status" value="1"/>
</dbReference>
<dbReference type="SUPFAM" id="SSF46915">
    <property type="entry name" value="Polynucleotide phosphorylase/guanosine pentaphosphate synthase (PNPase/GPSI), domain 3"/>
    <property type="match status" value="1"/>
</dbReference>
<dbReference type="SUPFAM" id="SSF55666">
    <property type="entry name" value="Ribonuclease PH domain 2-like"/>
    <property type="match status" value="2"/>
</dbReference>
<dbReference type="SUPFAM" id="SSF54211">
    <property type="entry name" value="Ribosomal protein S5 domain 2-like"/>
    <property type="match status" value="2"/>
</dbReference>
<dbReference type="PROSITE" id="PS50084">
    <property type="entry name" value="KH_TYPE_1"/>
    <property type="match status" value="1"/>
</dbReference>
<dbReference type="PROSITE" id="PS50126">
    <property type="entry name" value="S1"/>
    <property type="match status" value="1"/>
</dbReference>
<proteinExistence type="inferred from homology"/>
<gene>
    <name evidence="1" type="primary">pnp</name>
    <name type="ordered locus">Shew_2822</name>
</gene>
<evidence type="ECO:0000255" key="1">
    <source>
        <dbReference type="HAMAP-Rule" id="MF_01595"/>
    </source>
</evidence>
<name>PNP_SHELP</name>
<accession>A3QGU0</accession>
<organism>
    <name type="scientific">Shewanella loihica (strain ATCC BAA-1088 / PV-4)</name>
    <dbReference type="NCBI Taxonomy" id="323850"/>
    <lineage>
        <taxon>Bacteria</taxon>
        <taxon>Pseudomonadati</taxon>
        <taxon>Pseudomonadota</taxon>
        <taxon>Gammaproteobacteria</taxon>
        <taxon>Alteromonadales</taxon>
        <taxon>Shewanellaceae</taxon>
        <taxon>Shewanella</taxon>
    </lineage>
</organism>
<protein>
    <recommendedName>
        <fullName evidence="1">Polyribonucleotide nucleotidyltransferase</fullName>
        <ecNumber evidence="1">2.7.7.8</ecNumber>
    </recommendedName>
    <alternativeName>
        <fullName evidence="1">Polynucleotide phosphorylase</fullName>
        <shortName evidence="1">PNPase</shortName>
    </alternativeName>
</protein>
<sequence length="700" mass="75583">MNPIVKSFEYGQHTVTLETGVIARQADAAVLASMGDTTVLVTVVGKKAEEPGRDFFPLTVNYQEKTYAAGKIPGGFFKREGRPSEGETLTARLIDRPIRPLFPNGFKNEVQVIITVVSVDPEISPEVISMIGTSAALSISGIPFNGPLGSARVGYVDGEYILNPTVSQLENSQLELSVAGTENAVLMVESEADALPEEVMLGAVVYGHEQQQVVIQAIKELKAEVNKPMWDWTAPVQNEELVAKVKDLAEAGLTEAYQIVVKQDRYAQVDVVKTAAKEALLAENPDADAREIDGLLGSLEKKVVRSRIIAGNPRIDGREPDMVRALSVMAGVLPRTHGSALFTRGETQALVTCTLGTERDAQKIDSIMGEQTSRFMLHYNFPPYSVGETGMVGSPKRREIGHGKLAWRGIHAVMPTAEEFPYSIRVVSEITESNGSSSMASVCGTSLALMDAGVPIKTSVAGIAMGLVKEGDDFVVLSDILGDEDHLGDMDFKVAGTRDGVTALQMDIKIEGITKEIMQIALQQAYGARVHILNVMDQAISGHRAEISDHAPRITTLKINPEKIRDVIGKGGATIRALTEETGTTIELEDDGTVKIASANGDATKEAIRRIQEITAEVEVGTVYNGKVVRIVDFGAFVTILPGKDGLVHISQIAEERVANVSDYLEVGQEVKVKVMEVDRQGRVRLSMKEAQPKEEAASE</sequence>
<keyword id="KW-0963">Cytoplasm</keyword>
<keyword id="KW-0460">Magnesium</keyword>
<keyword id="KW-0479">Metal-binding</keyword>
<keyword id="KW-0548">Nucleotidyltransferase</keyword>
<keyword id="KW-1185">Reference proteome</keyword>
<keyword id="KW-0694">RNA-binding</keyword>
<keyword id="KW-0808">Transferase</keyword>
<reference key="1">
    <citation type="submission" date="2007-03" db="EMBL/GenBank/DDBJ databases">
        <title>Complete sequence of Shewanella loihica PV-4.</title>
        <authorList>
            <consortium name="US DOE Joint Genome Institute"/>
            <person name="Copeland A."/>
            <person name="Lucas S."/>
            <person name="Lapidus A."/>
            <person name="Barry K."/>
            <person name="Detter J.C."/>
            <person name="Glavina del Rio T."/>
            <person name="Hammon N."/>
            <person name="Israni S."/>
            <person name="Dalin E."/>
            <person name="Tice H."/>
            <person name="Pitluck S."/>
            <person name="Chain P."/>
            <person name="Malfatti S."/>
            <person name="Shin M."/>
            <person name="Vergez L."/>
            <person name="Schmutz J."/>
            <person name="Larimer F."/>
            <person name="Land M."/>
            <person name="Hauser L."/>
            <person name="Kyrpides N."/>
            <person name="Mikhailova N."/>
            <person name="Romine M.F."/>
            <person name="Serres G."/>
            <person name="Fredrickson J."/>
            <person name="Tiedje J."/>
            <person name="Richardson P."/>
        </authorList>
    </citation>
    <scope>NUCLEOTIDE SEQUENCE [LARGE SCALE GENOMIC DNA]</scope>
    <source>
        <strain>ATCC BAA-1088 / PV-4</strain>
    </source>
</reference>
<feature type="chain" id="PRO_0000329841" description="Polyribonucleotide nucleotidyltransferase">
    <location>
        <begin position="1"/>
        <end position="700"/>
    </location>
</feature>
<feature type="domain" description="KH" evidence="1">
    <location>
        <begin position="552"/>
        <end position="611"/>
    </location>
</feature>
<feature type="domain" description="S1 motif" evidence="1">
    <location>
        <begin position="621"/>
        <end position="689"/>
    </location>
</feature>
<feature type="binding site" evidence="1">
    <location>
        <position position="485"/>
    </location>
    <ligand>
        <name>Mg(2+)</name>
        <dbReference type="ChEBI" id="CHEBI:18420"/>
    </ligand>
</feature>
<feature type="binding site" evidence="1">
    <location>
        <position position="491"/>
    </location>
    <ligand>
        <name>Mg(2+)</name>
        <dbReference type="ChEBI" id="CHEBI:18420"/>
    </ligand>
</feature>